<proteinExistence type="predicted"/>
<sequence>MDPPNSLQQGIRFGFHSSSFVENMEGSQDEDNLRLLASAASGSSRDTETPTDHASGSAGGAAGGQSESRPGPSGGGVADLFPELRRLP</sequence>
<dbReference type="EMBL" id="X03000">
    <property type="protein sequence ID" value="CAA26761.1"/>
    <property type="molecule type" value="Genomic_DNA"/>
</dbReference>
<dbReference type="PIR" id="A03811">
    <property type="entry name" value="WMAD9"/>
</dbReference>
<dbReference type="InterPro" id="IPR006717">
    <property type="entry name" value="Adeno_E1B_55K_N"/>
</dbReference>
<dbReference type="Pfam" id="PF04623">
    <property type="entry name" value="Adeno_E1B_55K_N"/>
    <property type="match status" value="1"/>
</dbReference>
<protein>
    <recommendedName>
        <fullName>Early E1B 9 kDa protein</fullName>
    </recommendedName>
</protein>
<organismHost>
    <name type="scientific">Homo sapiens</name>
    <name type="common">Human</name>
    <dbReference type="NCBI Taxonomy" id="9606"/>
</organismHost>
<reference key="1">
    <citation type="journal article" date="1982" name="Gene">
        <title>Gene organization of the transforming region of adenovirus type 7 DNA.</title>
        <authorList>
            <person name="Dijkema R."/>
            <person name="Dekker B.M.M."/>
            <person name="van Ormondt H."/>
        </authorList>
    </citation>
    <scope>NUCLEOTIDE SEQUENCE [GENOMIC DNA]</scope>
    <source>
        <strain>Gomen</strain>
    </source>
</reference>
<organism>
    <name type="scientific">Human adenovirus B serotype 7</name>
    <name type="common">HAdV-7</name>
    <name type="synonym">Human adenovirus 7</name>
    <dbReference type="NCBI Taxonomy" id="10519"/>
    <lineage>
        <taxon>Viruses</taxon>
        <taxon>Varidnaviria</taxon>
        <taxon>Bamfordvirae</taxon>
        <taxon>Preplasmiviricota</taxon>
        <taxon>Tectiliviricetes</taxon>
        <taxon>Rowavirales</taxon>
        <taxon>Adenoviridae</taxon>
        <taxon>Mastadenovirus</taxon>
        <taxon>Human mastadenovirus B</taxon>
    </lineage>
</organism>
<comment type="miscellaneous">
    <text>Residues 1-86 are identical with residues 1-86 of the E1B 55K protein.</text>
</comment>
<feature type="chain" id="PRO_0000221735" description="Early E1B 9 kDa protein">
    <location>
        <begin position="1"/>
        <end position="88"/>
    </location>
</feature>
<feature type="region of interest" description="Disordered" evidence="1">
    <location>
        <begin position="23"/>
        <end position="88"/>
    </location>
</feature>
<feature type="compositionally biased region" description="Low complexity" evidence="1">
    <location>
        <begin position="34"/>
        <end position="44"/>
    </location>
</feature>
<evidence type="ECO:0000256" key="1">
    <source>
        <dbReference type="SAM" id="MobiDB-lite"/>
    </source>
</evidence>
<accession>P04490</accession>
<name>E1B9_ADE07</name>
<keyword id="KW-0244">Early protein</keyword>